<comment type="function">
    <text evidence="1">Cell wall formation. Catalyzes the transfer of a GlcNAc subunit on undecaprenyl-pyrophosphoryl-MurNAc-pentapeptide (lipid intermediate I) to form undecaprenyl-pyrophosphoryl-MurNAc-(pentapeptide)GlcNAc (lipid intermediate II).</text>
</comment>
<comment type="catalytic activity">
    <reaction evidence="1">
        <text>di-trans,octa-cis-undecaprenyl diphospho-N-acetyl-alpha-D-muramoyl-L-alanyl-D-glutamyl-meso-2,6-diaminopimeloyl-D-alanyl-D-alanine + UDP-N-acetyl-alpha-D-glucosamine = di-trans,octa-cis-undecaprenyl diphospho-[N-acetyl-alpha-D-glucosaminyl-(1-&gt;4)]-N-acetyl-alpha-D-muramoyl-L-alanyl-D-glutamyl-meso-2,6-diaminopimeloyl-D-alanyl-D-alanine + UDP + H(+)</text>
        <dbReference type="Rhea" id="RHEA:31227"/>
        <dbReference type="ChEBI" id="CHEBI:15378"/>
        <dbReference type="ChEBI" id="CHEBI:57705"/>
        <dbReference type="ChEBI" id="CHEBI:58223"/>
        <dbReference type="ChEBI" id="CHEBI:61387"/>
        <dbReference type="ChEBI" id="CHEBI:61388"/>
        <dbReference type="EC" id="2.4.1.227"/>
    </reaction>
</comment>
<comment type="pathway">
    <text evidence="1">Cell wall biogenesis; peptidoglycan biosynthesis.</text>
</comment>
<comment type="subcellular location">
    <subcellularLocation>
        <location evidence="1">Cell membrane</location>
        <topology evidence="1">Peripheral membrane protein</topology>
        <orientation evidence="1">Cytoplasmic side</orientation>
    </subcellularLocation>
</comment>
<comment type="similarity">
    <text evidence="1">Belongs to the glycosyltransferase 28 family. MurG subfamily.</text>
</comment>
<name>MURG_MYCLE</name>
<reference key="1">
    <citation type="journal article" date="2001" name="Nature">
        <title>Massive gene decay in the leprosy bacillus.</title>
        <authorList>
            <person name="Cole S.T."/>
            <person name="Eiglmeier K."/>
            <person name="Parkhill J."/>
            <person name="James K.D."/>
            <person name="Thomson N.R."/>
            <person name="Wheeler P.R."/>
            <person name="Honore N."/>
            <person name="Garnier T."/>
            <person name="Churcher C.M."/>
            <person name="Harris D.E."/>
            <person name="Mungall K.L."/>
            <person name="Basham D."/>
            <person name="Brown D."/>
            <person name="Chillingworth T."/>
            <person name="Connor R."/>
            <person name="Davies R.M."/>
            <person name="Devlin K."/>
            <person name="Duthoy S."/>
            <person name="Feltwell T."/>
            <person name="Fraser A."/>
            <person name="Hamlin N."/>
            <person name="Holroyd S."/>
            <person name="Hornsby T."/>
            <person name="Jagels K."/>
            <person name="Lacroix C."/>
            <person name="Maclean J."/>
            <person name="Moule S."/>
            <person name="Murphy L.D."/>
            <person name="Oliver K."/>
            <person name="Quail M.A."/>
            <person name="Rajandream M.A."/>
            <person name="Rutherford K.M."/>
            <person name="Rutter S."/>
            <person name="Seeger K."/>
            <person name="Simon S."/>
            <person name="Simmonds M."/>
            <person name="Skelton J."/>
            <person name="Squares R."/>
            <person name="Squares S."/>
            <person name="Stevens K."/>
            <person name="Taylor K."/>
            <person name="Whitehead S."/>
            <person name="Woodward J.R."/>
            <person name="Barrell B.G."/>
        </authorList>
    </citation>
    <scope>NUCLEOTIDE SEQUENCE [LARGE SCALE GENOMIC DNA]</scope>
    <source>
        <strain>TN</strain>
    </source>
</reference>
<protein>
    <recommendedName>
        <fullName evidence="1">UDP-N-acetylglucosamine--N-acetylmuramyl-(pentapeptide) pyrophosphoryl-undecaprenol N-acetylglucosamine transferase</fullName>
        <ecNumber evidence="1">2.4.1.227</ecNumber>
    </recommendedName>
    <alternativeName>
        <fullName evidence="1">Undecaprenyl-PP-MurNAc-pentapeptide-UDPGlcNAc GlcNAc transferase</fullName>
    </alternativeName>
</protein>
<organism>
    <name type="scientific">Mycobacterium leprae (strain TN)</name>
    <dbReference type="NCBI Taxonomy" id="272631"/>
    <lineage>
        <taxon>Bacteria</taxon>
        <taxon>Bacillati</taxon>
        <taxon>Actinomycetota</taxon>
        <taxon>Actinomycetes</taxon>
        <taxon>Mycobacteriales</taxon>
        <taxon>Mycobacteriaceae</taxon>
        <taxon>Mycobacterium</taxon>
    </lineage>
</organism>
<sequence length="407" mass="42423">MNNSVREPTRGRRGSPPVADAALSVNPPLSVVLAGGGTAGHVEPAMAVADALRALDPQVRITALGTSRGLETRLVPERGYHLELITPVPLPRKLTGDLARLPLRVWRAVRETRAVFEVVEAHVVVGFGGYVALPAYLAARGIPRVRRRIPVVVHEANARAGIANRVGVRTAERVLSAVPGSGLRGAEVVGVPIHATITTLNRPALRADARKHFGFTDDARVLLVFGGSQGAVSLNRAVAGAAEDLAASGVAVLHAYGLKNTLELRTPEYGEPPYVAVPYLDRMDLAYAAADLVICRSGAMTVAEVSAVGLPAIYVPFPIGNGEQRLNALPVVNAGGGLVVADADLTPGLVARQVVRLFSDPAQLAAMTAAAARVGHRDAAHHVAKVALDLARAERDTASGRSAGGKP</sequence>
<dbReference type="EC" id="2.4.1.227" evidence="1"/>
<dbReference type="EMBL" id="AL022602">
    <property type="protein sequence ID" value="CAA18668.1"/>
    <property type="molecule type" value="Genomic_DNA"/>
</dbReference>
<dbReference type="EMBL" id="AL583920">
    <property type="protein sequence ID" value="CAC31295.1"/>
    <property type="molecule type" value="Genomic_DNA"/>
</dbReference>
<dbReference type="PIR" id="D87023">
    <property type="entry name" value="D87023"/>
</dbReference>
<dbReference type="RefSeq" id="NP_301697.1">
    <property type="nucleotide sequence ID" value="NC_002677.1"/>
</dbReference>
<dbReference type="RefSeq" id="WP_010908021.1">
    <property type="nucleotide sequence ID" value="NC_002677.1"/>
</dbReference>
<dbReference type="SMR" id="O69552"/>
<dbReference type="STRING" id="272631.gene:17574740"/>
<dbReference type="CAZy" id="GT28">
    <property type="family name" value="Glycosyltransferase Family 28"/>
</dbReference>
<dbReference type="KEGG" id="mle:ML0914"/>
<dbReference type="PATRIC" id="fig|272631.5.peg.1657"/>
<dbReference type="Leproma" id="ML0914"/>
<dbReference type="eggNOG" id="COG0707">
    <property type="taxonomic scope" value="Bacteria"/>
</dbReference>
<dbReference type="HOGENOM" id="CLU_037404_1_0_11"/>
<dbReference type="OrthoDB" id="9808936at2"/>
<dbReference type="UniPathway" id="UPA00219"/>
<dbReference type="Proteomes" id="UP000000806">
    <property type="component" value="Chromosome"/>
</dbReference>
<dbReference type="GO" id="GO:0005886">
    <property type="term" value="C:plasma membrane"/>
    <property type="evidence" value="ECO:0007669"/>
    <property type="project" value="UniProtKB-SubCell"/>
</dbReference>
<dbReference type="GO" id="GO:0051991">
    <property type="term" value="F:UDP-N-acetyl-D-glucosamine:N-acetylmuramoyl-L-alanyl-D-glutamyl-meso-2,6-diaminopimelyl-D-alanyl-D-alanine-diphosphoundecaprenol 4-beta-N-acetylglucosaminlytransferase activity"/>
    <property type="evidence" value="ECO:0007669"/>
    <property type="project" value="RHEA"/>
</dbReference>
<dbReference type="GO" id="GO:0050511">
    <property type="term" value="F:undecaprenyldiphospho-muramoylpentapeptide beta-N-acetylglucosaminyltransferase activity"/>
    <property type="evidence" value="ECO:0007669"/>
    <property type="project" value="UniProtKB-UniRule"/>
</dbReference>
<dbReference type="GO" id="GO:0005975">
    <property type="term" value="P:carbohydrate metabolic process"/>
    <property type="evidence" value="ECO:0007669"/>
    <property type="project" value="InterPro"/>
</dbReference>
<dbReference type="GO" id="GO:0051301">
    <property type="term" value="P:cell division"/>
    <property type="evidence" value="ECO:0007669"/>
    <property type="project" value="UniProtKB-KW"/>
</dbReference>
<dbReference type="GO" id="GO:0071555">
    <property type="term" value="P:cell wall organization"/>
    <property type="evidence" value="ECO:0007669"/>
    <property type="project" value="UniProtKB-KW"/>
</dbReference>
<dbReference type="GO" id="GO:0030259">
    <property type="term" value="P:lipid glycosylation"/>
    <property type="evidence" value="ECO:0007669"/>
    <property type="project" value="UniProtKB-UniRule"/>
</dbReference>
<dbReference type="GO" id="GO:0009252">
    <property type="term" value="P:peptidoglycan biosynthetic process"/>
    <property type="evidence" value="ECO:0007669"/>
    <property type="project" value="UniProtKB-UniRule"/>
</dbReference>
<dbReference type="GO" id="GO:0008360">
    <property type="term" value="P:regulation of cell shape"/>
    <property type="evidence" value="ECO:0007669"/>
    <property type="project" value="UniProtKB-KW"/>
</dbReference>
<dbReference type="CDD" id="cd03785">
    <property type="entry name" value="GT28_MurG"/>
    <property type="match status" value="1"/>
</dbReference>
<dbReference type="Gene3D" id="3.40.50.2000">
    <property type="entry name" value="Glycogen Phosphorylase B"/>
    <property type="match status" value="2"/>
</dbReference>
<dbReference type="HAMAP" id="MF_00033">
    <property type="entry name" value="MurG"/>
    <property type="match status" value="1"/>
</dbReference>
<dbReference type="InterPro" id="IPR006009">
    <property type="entry name" value="GlcNAc_MurG"/>
</dbReference>
<dbReference type="InterPro" id="IPR007235">
    <property type="entry name" value="Glyco_trans_28_C"/>
</dbReference>
<dbReference type="InterPro" id="IPR004276">
    <property type="entry name" value="GlycoTrans_28_N"/>
</dbReference>
<dbReference type="NCBIfam" id="TIGR01133">
    <property type="entry name" value="murG"/>
    <property type="match status" value="1"/>
</dbReference>
<dbReference type="PANTHER" id="PTHR21015:SF22">
    <property type="entry name" value="GLYCOSYLTRANSFERASE"/>
    <property type="match status" value="1"/>
</dbReference>
<dbReference type="PANTHER" id="PTHR21015">
    <property type="entry name" value="UDP-N-ACETYLGLUCOSAMINE--N-ACETYLMURAMYL-(PENTAPEPTIDE) PYROPHOSPHORYL-UNDECAPRENOL N-ACETYLGLUCOSAMINE TRANSFERASE 1"/>
    <property type="match status" value="1"/>
</dbReference>
<dbReference type="Pfam" id="PF04101">
    <property type="entry name" value="Glyco_tran_28_C"/>
    <property type="match status" value="1"/>
</dbReference>
<dbReference type="Pfam" id="PF03033">
    <property type="entry name" value="Glyco_transf_28"/>
    <property type="match status" value="1"/>
</dbReference>
<dbReference type="SUPFAM" id="SSF53756">
    <property type="entry name" value="UDP-Glycosyltransferase/glycogen phosphorylase"/>
    <property type="match status" value="1"/>
</dbReference>
<feature type="chain" id="PRO_0000109188" description="UDP-N-acetylglucosamine--N-acetylmuramyl-(pentapeptide) pyrophosphoryl-undecaprenol N-acetylglucosamine transferase">
    <location>
        <begin position="1"/>
        <end position="407"/>
    </location>
</feature>
<feature type="region of interest" description="Disordered" evidence="2">
    <location>
        <begin position="1"/>
        <end position="21"/>
    </location>
</feature>
<feature type="binding site" evidence="1">
    <location>
        <begin position="38"/>
        <end position="40"/>
    </location>
    <ligand>
        <name>UDP-N-acetyl-alpha-D-glucosamine</name>
        <dbReference type="ChEBI" id="CHEBI:57705"/>
    </ligand>
</feature>
<feature type="binding site" evidence="1">
    <location>
        <position position="157"/>
    </location>
    <ligand>
        <name>UDP-N-acetyl-alpha-D-glucosamine</name>
        <dbReference type="ChEBI" id="CHEBI:57705"/>
    </ligand>
</feature>
<feature type="binding site" evidence="1">
    <location>
        <position position="228"/>
    </location>
    <ligand>
        <name>UDP-N-acetyl-alpha-D-glucosamine</name>
        <dbReference type="ChEBI" id="CHEBI:57705"/>
    </ligand>
</feature>
<feature type="binding site" evidence="1">
    <location>
        <position position="324"/>
    </location>
    <ligand>
        <name>UDP-N-acetyl-alpha-D-glucosamine</name>
        <dbReference type="ChEBI" id="CHEBI:57705"/>
    </ligand>
</feature>
<gene>
    <name evidence="1" type="primary">murG</name>
    <name type="ordered locus">ML0914</name>
    <name type="ORF">MLCB268.02c</name>
</gene>
<accession>O69552</accession>
<keyword id="KW-0131">Cell cycle</keyword>
<keyword id="KW-0132">Cell division</keyword>
<keyword id="KW-1003">Cell membrane</keyword>
<keyword id="KW-0133">Cell shape</keyword>
<keyword id="KW-0961">Cell wall biogenesis/degradation</keyword>
<keyword id="KW-0328">Glycosyltransferase</keyword>
<keyword id="KW-0472">Membrane</keyword>
<keyword id="KW-0573">Peptidoglycan synthesis</keyword>
<keyword id="KW-1185">Reference proteome</keyword>
<keyword id="KW-0808">Transferase</keyword>
<evidence type="ECO:0000255" key="1">
    <source>
        <dbReference type="HAMAP-Rule" id="MF_00033"/>
    </source>
</evidence>
<evidence type="ECO:0000256" key="2">
    <source>
        <dbReference type="SAM" id="MobiDB-lite"/>
    </source>
</evidence>
<proteinExistence type="inferred from homology"/>